<dbReference type="EMBL" id="CP000950">
    <property type="protein sequence ID" value="ACA69174.1"/>
    <property type="molecule type" value="Genomic_DNA"/>
</dbReference>
<dbReference type="SMR" id="B1JSP3"/>
<dbReference type="KEGG" id="ypy:YPK_2900"/>
<dbReference type="PATRIC" id="fig|502800.11.peg.3619"/>
<dbReference type="GO" id="GO:0042597">
    <property type="term" value="C:periplasmic space"/>
    <property type="evidence" value="ECO:0007669"/>
    <property type="project" value="UniProtKB-SubCell"/>
</dbReference>
<dbReference type="Gene3D" id="2.40.30.170">
    <property type="match status" value="1"/>
</dbReference>
<dbReference type="Gene3D" id="2.40.50.100">
    <property type="match status" value="1"/>
</dbReference>
<dbReference type="Gene3D" id="1.10.287.470">
    <property type="entry name" value="Helix hairpin bin"/>
    <property type="match status" value="2"/>
</dbReference>
<dbReference type="HAMAP" id="MF_01304">
    <property type="entry name" value="UPF0194"/>
    <property type="match status" value="1"/>
</dbReference>
<dbReference type="InterPro" id="IPR032317">
    <property type="entry name" value="CusB_D23"/>
</dbReference>
<dbReference type="InterPro" id="IPR022936">
    <property type="entry name" value="UPF0194_membrane_YbhG"/>
</dbReference>
<dbReference type="InterPro" id="IPR050465">
    <property type="entry name" value="UPF0194_transport"/>
</dbReference>
<dbReference type="NCBIfam" id="NF002939">
    <property type="entry name" value="PRK03598.1"/>
    <property type="match status" value="1"/>
</dbReference>
<dbReference type="PANTHER" id="PTHR32347">
    <property type="entry name" value="EFFLUX SYSTEM COMPONENT YKNX-RELATED"/>
    <property type="match status" value="1"/>
</dbReference>
<dbReference type="PANTHER" id="PTHR32347:SF29">
    <property type="entry name" value="UPF0194 MEMBRANE PROTEIN YBHG"/>
    <property type="match status" value="1"/>
</dbReference>
<dbReference type="Pfam" id="PF16576">
    <property type="entry name" value="HlyD_D23"/>
    <property type="match status" value="1"/>
</dbReference>
<dbReference type="SUPFAM" id="SSF111369">
    <property type="entry name" value="HlyD-like secretion proteins"/>
    <property type="match status" value="2"/>
</dbReference>
<keyword id="KW-0175">Coiled coil</keyword>
<keyword id="KW-0574">Periplasm</keyword>
<keyword id="KW-0732">Signal</keyword>
<comment type="subcellular location">
    <subcellularLocation>
        <location evidence="1">Periplasm</location>
    </subcellularLocation>
</comment>
<comment type="similarity">
    <text evidence="1">Belongs to the UPF0194 family.</text>
</comment>
<reference key="1">
    <citation type="submission" date="2008-02" db="EMBL/GenBank/DDBJ databases">
        <title>Complete sequence of Yersinia pseudotuberculosis YPIII.</title>
        <authorList>
            <consortium name="US DOE Joint Genome Institute"/>
            <person name="Copeland A."/>
            <person name="Lucas S."/>
            <person name="Lapidus A."/>
            <person name="Glavina del Rio T."/>
            <person name="Dalin E."/>
            <person name="Tice H."/>
            <person name="Bruce D."/>
            <person name="Goodwin L."/>
            <person name="Pitluck S."/>
            <person name="Munk A.C."/>
            <person name="Brettin T."/>
            <person name="Detter J.C."/>
            <person name="Han C."/>
            <person name="Tapia R."/>
            <person name="Schmutz J."/>
            <person name="Larimer F."/>
            <person name="Land M."/>
            <person name="Hauser L."/>
            <person name="Challacombe J.F."/>
            <person name="Green L."/>
            <person name="Lindler L.E."/>
            <person name="Nikolich M.P."/>
            <person name="Richardson P."/>
        </authorList>
    </citation>
    <scope>NUCLEOTIDE SEQUENCE [LARGE SCALE GENOMIC DNA]</scope>
    <source>
        <strain>YPIII</strain>
    </source>
</reference>
<feature type="signal peptide" evidence="1">
    <location>
        <begin position="1"/>
        <end position="22"/>
    </location>
</feature>
<feature type="chain" id="PRO_5000316256" description="UPF0194 membrane protein YPK_2900">
    <location>
        <begin position="23"/>
        <end position="328"/>
    </location>
</feature>
<feature type="coiled-coil region" evidence="1">
    <location>
        <begin position="80"/>
        <end position="109"/>
    </location>
</feature>
<feature type="coiled-coil region" evidence="1">
    <location>
        <begin position="141"/>
        <end position="209"/>
    </location>
</feature>
<accession>B1JSP3</accession>
<name>Y2900_YERPY</name>
<organism>
    <name type="scientific">Yersinia pseudotuberculosis serotype O:3 (strain YPIII)</name>
    <dbReference type="NCBI Taxonomy" id="502800"/>
    <lineage>
        <taxon>Bacteria</taxon>
        <taxon>Pseudomonadati</taxon>
        <taxon>Pseudomonadota</taxon>
        <taxon>Gammaproteobacteria</taxon>
        <taxon>Enterobacterales</taxon>
        <taxon>Yersiniaceae</taxon>
        <taxon>Yersinia</taxon>
    </lineage>
</organism>
<proteinExistence type="inferred from homology"/>
<protein>
    <recommendedName>
        <fullName evidence="1">UPF0194 membrane protein YPK_2900</fullName>
    </recommendedName>
</protein>
<gene>
    <name type="ordered locus">YPK_2900</name>
</gene>
<sequence length="328" mass="35923">MNRKKIIVAAVIVALLATLAYGWHYYRQQNDASLTLYGNVDIRTVNLGFRVAGRLASLAVDEGDDIHPGQTLGKLDDGPYLNALKQAQANVQSAQAQLALLKAGYREEEIAQVRSEVAQRQAAFDYADNFLKRQQGLWASKAVSANELENARTARNQAQANLQAAKDKLAQFLSGNRPQEIAQAEANLAQTEAELAQAQLNLQDTILLAPSAGTVLTRAVEPGTILSASNTVFTVSLTDPVWVRAYVSERHLGQAIPGSEVEVFTDGRPDKPYHGKIGFVSPTAEFTPKTVETPDLRTDLVYRLRIIITDADESLRQGMPVTVRFPQR</sequence>
<evidence type="ECO:0000255" key="1">
    <source>
        <dbReference type="HAMAP-Rule" id="MF_01304"/>
    </source>
</evidence>